<evidence type="ECO:0000250" key="1"/>
<evidence type="ECO:0000250" key="2">
    <source>
        <dbReference type="UniProtKB" id="Q6PIW4"/>
    </source>
</evidence>
<evidence type="ECO:0000256" key="3">
    <source>
        <dbReference type="SAM" id="MobiDB-lite"/>
    </source>
</evidence>
<evidence type="ECO:0000305" key="4"/>
<accession>Q503S1</accession>
<comment type="function">
    <text evidence="1">ATP-dependent microtubule severing protein. Severs microtubules along their length and depolymerizes their ends, primarily the minus-end, suppressing microtubule growth from and attachment to centrosomes. Microtubule severing may promote rapid reorganization of cellular microtubule arrays and the release of microtubules from the centrosome following nucleation. Microtubule release from the mitotic spindle poles may allow depolymerization of the microtubule end proximal to the spindle pole, leading to poleward microtubule flux and poleward motion of chromosome (By similarity).</text>
</comment>
<comment type="subcellular location">
    <subcellularLocation>
        <location>Nucleus matrix</location>
    </subcellularLocation>
    <subcellularLocation>
        <location evidence="1">Cytoplasm</location>
        <location evidence="1">Cytoskeleton</location>
        <location evidence="1">Microtubule organizing center</location>
        <location evidence="1">Centrosome</location>
    </subcellularLocation>
    <text evidence="1">Localizes to centrosomes throughout mitosis and to the spindle midzone during telophase.</text>
</comment>
<comment type="similarity">
    <text evidence="4">Belongs to the AAA ATPase family.</text>
</comment>
<sequence>MQWTPEHAQWAEQHFDISSTTRSLAHKAEAYRGHLQRTYQYAWANDDISALTASNLLKKYAEKYSGILEGPSERALLCSYSESAPGLLNGRKSESDAWQEGIYPMSCAADVISASKTGMTPALPPPDVTASVGSSTGVASSLSEPSYSSSNCGNHASALHSGIPSQEFASSYNGSYLHSTYSGGQSTPALPSPHPSPLHSAGLLQPPPPPPPTLVPSYNTSSPNLSSYNYPPAGYPPQTPVAPGYSPGGAPPPSAYLPSGIAAPTPLPPSTIPGYSYQSHNHAPIAPTPLNGSSANTLKRKAFYMTGQGDMDSSYGNFNYSQQRSAQSPMYRMPDNSLVDSTRGNGFDRNADTSSLAFKPTKQSMPTDQQRKFGSQAGRALTPPSYGSSKGSLGSMRSGESFGKFGSPVMSDHGDDSRQHLPHSIDTATSSSHPAEEQLKNSDANLVEMVTTEILQQTSPVDWSDIAGLEMAKATIKDEVLWPILRPDMFSGLATLPRSILLFGPQGTGRTLLGRCMASQLGAAFLLLSGSALVTKWLGEGEKIVQASFLIARCRQPSVVFISDVDLLLSSQLSEESPVNRIKSELLLQLDGVLSSPEEHVLVVCSTSKPEEIDESLRRYFVKRLLVPLPDATARHQIISQLLSQHNYCLSDKEVTLLVQRTDGFSGLDVVRLCQEALVGPLHGMPGADLSGMIPGQMRPVSYQDFENVFCKIQPSISQKELDTYTEWNKMFGCSQ</sequence>
<proteinExistence type="evidence at transcript level"/>
<gene>
    <name type="primary">fign</name>
    <name type="ORF">zgc:110229</name>
</gene>
<name>FIGN_DANRE</name>
<organism>
    <name type="scientific">Danio rerio</name>
    <name type="common">Zebrafish</name>
    <name type="synonym">Brachydanio rerio</name>
    <dbReference type="NCBI Taxonomy" id="7955"/>
    <lineage>
        <taxon>Eukaryota</taxon>
        <taxon>Metazoa</taxon>
        <taxon>Chordata</taxon>
        <taxon>Craniata</taxon>
        <taxon>Vertebrata</taxon>
        <taxon>Euteleostomi</taxon>
        <taxon>Actinopterygii</taxon>
        <taxon>Neopterygii</taxon>
        <taxon>Teleostei</taxon>
        <taxon>Ostariophysi</taxon>
        <taxon>Cypriniformes</taxon>
        <taxon>Danionidae</taxon>
        <taxon>Danioninae</taxon>
        <taxon>Danio</taxon>
    </lineage>
</organism>
<dbReference type="EMBL" id="BC095207">
    <property type="protein sequence ID" value="AAH95207.1"/>
    <property type="molecule type" value="mRNA"/>
</dbReference>
<dbReference type="RefSeq" id="NP_001018411.1">
    <property type="nucleotide sequence ID" value="NM_001020575.1"/>
</dbReference>
<dbReference type="SMR" id="Q503S1"/>
<dbReference type="FunCoup" id="Q503S1">
    <property type="interactions" value="33"/>
</dbReference>
<dbReference type="STRING" id="7955.ENSDARP00000152560"/>
<dbReference type="PaxDb" id="7955-ENSDARP00000006334"/>
<dbReference type="GeneID" id="553599"/>
<dbReference type="KEGG" id="dre:553599"/>
<dbReference type="AGR" id="ZFIN:ZDB-GENE-050522-339"/>
<dbReference type="CTD" id="55137"/>
<dbReference type="ZFIN" id="ZDB-GENE-050522-339">
    <property type="gene designation" value="fign"/>
</dbReference>
<dbReference type="eggNOG" id="KOG0740">
    <property type="taxonomic scope" value="Eukaryota"/>
</dbReference>
<dbReference type="InParanoid" id="Q503S1"/>
<dbReference type="OrthoDB" id="8803010at2759"/>
<dbReference type="PhylomeDB" id="Q503S1"/>
<dbReference type="PRO" id="PR:Q503S1"/>
<dbReference type="Proteomes" id="UP000000437">
    <property type="component" value="Chromosome 9"/>
</dbReference>
<dbReference type="GO" id="GO:0005813">
    <property type="term" value="C:centrosome"/>
    <property type="evidence" value="ECO:0007669"/>
    <property type="project" value="UniProtKB-SubCell"/>
</dbReference>
<dbReference type="GO" id="GO:0005737">
    <property type="term" value="C:cytoplasm"/>
    <property type="evidence" value="ECO:0007669"/>
    <property type="project" value="UniProtKB-KW"/>
</dbReference>
<dbReference type="GO" id="GO:0005874">
    <property type="term" value="C:microtubule"/>
    <property type="evidence" value="ECO:0007669"/>
    <property type="project" value="UniProtKB-KW"/>
</dbReference>
<dbReference type="GO" id="GO:0016363">
    <property type="term" value="C:nuclear matrix"/>
    <property type="evidence" value="ECO:0007669"/>
    <property type="project" value="UniProtKB-SubCell"/>
</dbReference>
<dbReference type="GO" id="GO:0005524">
    <property type="term" value="F:ATP binding"/>
    <property type="evidence" value="ECO:0007669"/>
    <property type="project" value="UniProtKB-KW"/>
</dbReference>
<dbReference type="GO" id="GO:0016887">
    <property type="term" value="F:ATP hydrolysis activity"/>
    <property type="evidence" value="ECO:0000318"/>
    <property type="project" value="GO_Central"/>
</dbReference>
<dbReference type="GO" id="GO:0008568">
    <property type="term" value="F:microtubule severing ATPase activity"/>
    <property type="evidence" value="ECO:0000318"/>
    <property type="project" value="GO_Central"/>
</dbReference>
<dbReference type="GO" id="GO:0009653">
    <property type="term" value="P:anatomical structure morphogenesis"/>
    <property type="evidence" value="ECO:0007669"/>
    <property type="project" value="UniProtKB-ARBA"/>
</dbReference>
<dbReference type="GO" id="GO:0051301">
    <property type="term" value="P:cell division"/>
    <property type="evidence" value="ECO:0007669"/>
    <property type="project" value="UniProtKB-KW"/>
</dbReference>
<dbReference type="CDD" id="cd19523">
    <property type="entry name" value="RecA-like_fidgetin"/>
    <property type="match status" value="1"/>
</dbReference>
<dbReference type="FunFam" id="1.10.8.60:FF:000022">
    <property type="entry name" value="Fidgetin like 1"/>
    <property type="match status" value="1"/>
</dbReference>
<dbReference type="FunFam" id="3.40.50.300:FF:000495">
    <property type="entry name" value="Fidgetin like 2"/>
    <property type="match status" value="1"/>
</dbReference>
<dbReference type="Gene3D" id="1.10.8.60">
    <property type="match status" value="1"/>
</dbReference>
<dbReference type="Gene3D" id="3.40.50.300">
    <property type="entry name" value="P-loop containing nucleotide triphosphate hydrolases"/>
    <property type="match status" value="1"/>
</dbReference>
<dbReference type="InterPro" id="IPR003593">
    <property type="entry name" value="AAA+_ATPase"/>
</dbReference>
<dbReference type="InterPro" id="IPR003959">
    <property type="entry name" value="ATPase_AAA_core"/>
</dbReference>
<dbReference type="InterPro" id="IPR047828">
    <property type="entry name" value="Fidgetin_ATPase"/>
</dbReference>
<dbReference type="InterPro" id="IPR050304">
    <property type="entry name" value="MT-severing_AAA_ATPase"/>
</dbReference>
<dbReference type="InterPro" id="IPR027417">
    <property type="entry name" value="P-loop_NTPase"/>
</dbReference>
<dbReference type="InterPro" id="IPR015415">
    <property type="entry name" value="Spast_Vps4_C"/>
</dbReference>
<dbReference type="PANTHER" id="PTHR23074">
    <property type="entry name" value="AAA DOMAIN-CONTAINING"/>
    <property type="match status" value="1"/>
</dbReference>
<dbReference type="PANTHER" id="PTHR23074:SF14">
    <property type="entry name" value="FIDGETIN"/>
    <property type="match status" value="1"/>
</dbReference>
<dbReference type="Pfam" id="PF00004">
    <property type="entry name" value="AAA"/>
    <property type="match status" value="1"/>
</dbReference>
<dbReference type="Pfam" id="PF09336">
    <property type="entry name" value="Vps4_C"/>
    <property type="match status" value="1"/>
</dbReference>
<dbReference type="SMART" id="SM00382">
    <property type="entry name" value="AAA"/>
    <property type="match status" value="1"/>
</dbReference>
<dbReference type="SUPFAM" id="SSF52540">
    <property type="entry name" value="P-loop containing nucleoside triphosphate hydrolases"/>
    <property type="match status" value="1"/>
</dbReference>
<reference key="1">
    <citation type="submission" date="2005-05" db="EMBL/GenBank/DDBJ databases">
        <authorList>
            <consortium name="NIH - Zebrafish Gene Collection (ZGC) project"/>
        </authorList>
    </citation>
    <scope>NUCLEOTIDE SEQUENCE [LARGE SCALE MRNA]</scope>
    <source>
        <tissue>Ovary</tissue>
    </source>
</reference>
<protein>
    <recommendedName>
        <fullName>Fidgetin</fullName>
    </recommendedName>
</protein>
<feature type="chain" id="PRO_0000250750" description="Fidgetin">
    <location>
        <begin position="1"/>
        <end position="736"/>
    </location>
</feature>
<feature type="region of interest" description="Disordered" evidence="3">
    <location>
        <begin position="118"/>
        <end position="155"/>
    </location>
</feature>
<feature type="region of interest" description="Disordered" evidence="3">
    <location>
        <begin position="180"/>
        <end position="248"/>
    </location>
</feature>
<feature type="region of interest" description="Disordered" evidence="3">
    <location>
        <begin position="272"/>
        <end position="295"/>
    </location>
</feature>
<feature type="region of interest" description="Disordered" evidence="3">
    <location>
        <begin position="341"/>
        <end position="438"/>
    </location>
</feature>
<feature type="compositionally biased region" description="Low complexity" evidence="3">
    <location>
        <begin position="128"/>
        <end position="150"/>
    </location>
</feature>
<feature type="compositionally biased region" description="Pro residues" evidence="3">
    <location>
        <begin position="205"/>
        <end position="214"/>
    </location>
</feature>
<feature type="compositionally biased region" description="Low complexity" evidence="3">
    <location>
        <begin position="216"/>
        <end position="232"/>
    </location>
</feature>
<feature type="compositionally biased region" description="Polar residues" evidence="3">
    <location>
        <begin position="352"/>
        <end position="368"/>
    </location>
</feature>
<feature type="binding site" evidence="2">
    <location>
        <position position="467"/>
    </location>
    <ligand>
        <name>ATP</name>
        <dbReference type="ChEBI" id="CHEBI:30616"/>
    </ligand>
</feature>
<feature type="binding site" evidence="2">
    <location>
        <begin position="507"/>
        <end position="512"/>
    </location>
    <ligand>
        <name>ATP</name>
        <dbReference type="ChEBI" id="CHEBI:30616"/>
    </ligand>
</feature>
<keyword id="KW-0067">ATP-binding</keyword>
<keyword id="KW-0131">Cell cycle</keyword>
<keyword id="KW-0132">Cell division</keyword>
<keyword id="KW-0963">Cytoplasm</keyword>
<keyword id="KW-0206">Cytoskeleton</keyword>
<keyword id="KW-0493">Microtubule</keyword>
<keyword id="KW-0498">Mitosis</keyword>
<keyword id="KW-0547">Nucleotide-binding</keyword>
<keyword id="KW-0539">Nucleus</keyword>
<keyword id="KW-1185">Reference proteome</keyword>